<comment type="function">
    <text evidence="1">Catalyzes the decomposition of L-selenocysteine to L-alanine and elemental selenium.</text>
</comment>
<comment type="catalytic activity">
    <reaction evidence="1">
        <text>L-selenocysteine + AH2 = hydrogenselenide + L-alanine + A + H(+)</text>
        <dbReference type="Rhea" id="RHEA:11632"/>
        <dbReference type="ChEBI" id="CHEBI:13193"/>
        <dbReference type="ChEBI" id="CHEBI:15378"/>
        <dbReference type="ChEBI" id="CHEBI:17499"/>
        <dbReference type="ChEBI" id="CHEBI:29317"/>
        <dbReference type="ChEBI" id="CHEBI:57843"/>
        <dbReference type="ChEBI" id="CHEBI:57972"/>
        <dbReference type="EC" id="4.4.1.16"/>
    </reaction>
    <physiologicalReaction direction="left-to-right" evidence="1">
        <dbReference type="Rhea" id="RHEA:11633"/>
    </physiologicalReaction>
</comment>
<comment type="cofactor">
    <cofactor evidence="1">
        <name>pyridoxal 5'-phosphate</name>
        <dbReference type="ChEBI" id="CHEBI:597326"/>
    </cofactor>
</comment>
<comment type="subunit">
    <text evidence="1">Homodimer.</text>
</comment>
<comment type="subcellular location">
    <subcellularLocation>
        <location evidence="2">Cytoplasm</location>
        <location evidence="2">Cytosol</location>
    </subcellularLocation>
</comment>
<comment type="similarity">
    <text evidence="3">Belongs to the class-V pyridoxal-phosphate-dependent aminotransferase family.</text>
</comment>
<accession>Q66IQ6</accession>
<feature type="chain" id="PRO_0000317015" description="Selenocysteine lyase">
    <location>
        <begin position="1"/>
        <end position="426"/>
    </location>
</feature>
<feature type="active site" description="S-selanylcysteine intermediate" evidence="1">
    <location>
        <position position="367"/>
    </location>
</feature>
<feature type="modified residue" description="N6-(pyridoxal phosphate)lysine" evidence="1">
    <location>
        <position position="239"/>
    </location>
</feature>
<evidence type="ECO:0000250" key="1">
    <source>
        <dbReference type="UniProtKB" id="Q68FT9"/>
    </source>
</evidence>
<evidence type="ECO:0000250" key="2">
    <source>
        <dbReference type="UniProtKB" id="Q9JLI6"/>
    </source>
</evidence>
<evidence type="ECO:0000305" key="3"/>
<name>SCLY_XENLA</name>
<proteinExistence type="evidence at transcript level"/>
<keyword id="KW-0963">Cytoplasm</keyword>
<keyword id="KW-0456">Lyase</keyword>
<keyword id="KW-0663">Pyridoxal phosphate</keyword>
<keyword id="KW-1185">Reference proteome</keyword>
<keyword id="KW-0808">Transferase</keyword>
<reference key="1">
    <citation type="submission" date="2004-08" db="EMBL/GenBank/DDBJ databases">
        <authorList>
            <consortium name="NIH - Xenopus Gene Collection (XGC) project"/>
        </authorList>
    </citation>
    <scope>NUCLEOTIDE SEQUENCE [LARGE SCALE MRNA]</scope>
</reference>
<dbReference type="EC" id="4.4.1.16"/>
<dbReference type="EMBL" id="BC081243">
    <property type="protein sequence ID" value="AAH81243.1"/>
    <property type="molecule type" value="mRNA"/>
</dbReference>
<dbReference type="RefSeq" id="NP_001087800.1">
    <property type="nucleotide sequence ID" value="NM_001094331.1"/>
</dbReference>
<dbReference type="SMR" id="Q66IQ6"/>
<dbReference type="DNASU" id="447624"/>
<dbReference type="GeneID" id="447624"/>
<dbReference type="KEGG" id="xla:447624"/>
<dbReference type="AGR" id="Xenbase:XB-GENE-6077566"/>
<dbReference type="CTD" id="447624"/>
<dbReference type="Xenbase" id="XB-GENE-6077566">
    <property type="gene designation" value="scly.L"/>
</dbReference>
<dbReference type="OrthoDB" id="10250117at2759"/>
<dbReference type="Proteomes" id="UP000186698">
    <property type="component" value="Chromosome 5L"/>
</dbReference>
<dbReference type="Bgee" id="447624">
    <property type="expression patterns" value="Expressed in pancreas and 19 other cell types or tissues"/>
</dbReference>
<dbReference type="GO" id="GO:0005829">
    <property type="term" value="C:cytosol"/>
    <property type="evidence" value="ECO:0007669"/>
    <property type="project" value="UniProtKB-SubCell"/>
</dbReference>
<dbReference type="GO" id="GO:0009000">
    <property type="term" value="F:selenocysteine lyase activity"/>
    <property type="evidence" value="ECO:0007669"/>
    <property type="project" value="UniProtKB-EC"/>
</dbReference>
<dbReference type="GO" id="GO:0016740">
    <property type="term" value="F:transferase activity"/>
    <property type="evidence" value="ECO:0007669"/>
    <property type="project" value="UniProtKB-KW"/>
</dbReference>
<dbReference type="FunFam" id="3.40.640.10:FF:000083">
    <property type="entry name" value="Selenocysteine lyase"/>
    <property type="match status" value="1"/>
</dbReference>
<dbReference type="FunFam" id="3.90.1150.10:FF:000065">
    <property type="entry name" value="Selenocysteine lyase"/>
    <property type="match status" value="1"/>
</dbReference>
<dbReference type="Gene3D" id="1.10.260.50">
    <property type="match status" value="1"/>
</dbReference>
<dbReference type="Gene3D" id="3.90.1150.10">
    <property type="entry name" value="Aspartate Aminotransferase, domain 1"/>
    <property type="match status" value="1"/>
</dbReference>
<dbReference type="Gene3D" id="3.40.640.10">
    <property type="entry name" value="Type I PLP-dependent aspartate aminotransferase-like (Major domain)"/>
    <property type="match status" value="1"/>
</dbReference>
<dbReference type="InterPro" id="IPR000192">
    <property type="entry name" value="Aminotrans_V_dom"/>
</dbReference>
<dbReference type="InterPro" id="IPR016454">
    <property type="entry name" value="Cysteine_dSase"/>
</dbReference>
<dbReference type="InterPro" id="IPR015424">
    <property type="entry name" value="PyrdxlP-dep_Trfase"/>
</dbReference>
<dbReference type="InterPro" id="IPR015421">
    <property type="entry name" value="PyrdxlP-dep_Trfase_major"/>
</dbReference>
<dbReference type="InterPro" id="IPR015422">
    <property type="entry name" value="PyrdxlP-dep_Trfase_small"/>
</dbReference>
<dbReference type="PANTHER" id="PTHR11601">
    <property type="entry name" value="CYSTEINE DESULFURYLASE FAMILY MEMBER"/>
    <property type="match status" value="1"/>
</dbReference>
<dbReference type="PANTHER" id="PTHR11601:SF62">
    <property type="entry name" value="SELENOCYSTEINE LYASE"/>
    <property type="match status" value="1"/>
</dbReference>
<dbReference type="Pfam" id="PF00266">
    <property type="entry name" value="Aminotran_5"/>
    <property type="match status" value="1"/>
</dbReference>
<dbReference type="PIRSF" id="PIRSF005572">
    <property type="entry name" value="NifS"/>
    <property type="match status" value="1"/>
</dbReference>
<dbReference type="SUPFAM" id="SSF53383">
    <property type="entry name" value="PLP-dependent transferases"/>
    <property type="match status" value="1"/>
</dbReference>
<organism>
    <name type="scientific">Xenopus laevis</name>
    <name type="common">African clawed frog</name>
    <dbReference type="NCBI Taxonomy" id="8355"/>
    <lineage>
        <taxon>Eukaryota</taxon>
        <taxon>Metazoa</taxon>
        <taxon>Chordata</taxon>
        <taxon>Craniata</taxon>
        <taxon>Vertebrata</taxon>
        <taxon>Euteleostomi</taxon>
        <taxon>Amphibia</taxon>
        <taxon>Batrachia</taxon>
        <taxon>Anura</taxon>
        <taxon>Pipoidea</taxon>
        <taxon>Pipidae</taxon>
        <taxon>Xenopodinae</taxon>
        <taxon>Xenopus</taxon>
        <taxon>Xenopus</taxon>
    </lineage>
</organism>
<protein>
    <recommendedName>
        <fullName>Selenocysteine lyase</fullName>
        <ecNumber>4.4.1.16</ecNumber>
    </recommendedName>
</protein>
<sequence length="426" mass="46263">MVDTESQKEKNHLNHKIYLDYNATTPPAREVVGTVAEALQEAWGNPSSSYTAGCKAKELIDTARARIAKMVGGKPEDIIFTSGGTEANNMVLFSAVENFNRTSKERQNNNVDWALPHIITSNVEHDSVALPLLQLQKTHKAEITFVPVSTVTGRVEVEDVISAVRPNTCLVSIMLANNETGVIMPVGELSQCLASLSRKRSAQGLPEILLHTDAAQALGKVEVDVQELGVNYLTIVGHKFYGPRIGALYVGGLGHQSPLLPMLYGGGREGNFRPGTENTPMIAGLGQAAELVSLHCAAYEVHMRRIRDYLEQKLEAVFGDRIRLNSRFPGAERLPNTCNVSLLKPAVLGREWLSHCQYLQASVGAACHSDRGDSPSPVLLKSGVPQDAARSAVRLSVGRETSQDDVDLIVRDLEQAAQLLGMNKQS</sequence>
<gene>
    <name type="primary">scly</name>
</gene>